<feature type="chain" id="PRO_0000267434" description="7-methyl-GTP pyrophosphatase">
    <location>
        <begin position="1"/>
        <end position="194"/>
    </location>
</feature>
<feature type="active site" description="Proton acceptor" evidence="1">
    <location>
        <position position="69"/>
    </location>
</feature>
<feature type="site" description="Important for substrate specificity" evidence="1">
    <location>
        <position position="12"/>
    </location>
</feature>
<feature type="site" description="Important for substrate specificity" evidence="1">
    <location>
        <position position="70"/>
    </location>
</feature>
<feature type="site" description="Important for substrate specificity" evidence="1">
    <location>
        <position position="154"/>
    </location>
</feature>
<dbReference type="EC" id="3.6.1.-" evidence="1"/>
<dbReference type="EMBL" id="CP000038">
    <property type="protein sequence ID" value="AAZ87832.1"/>
    <property type="status" value="ALT_INIT"/>
    <property type="molecule type" value="Genomic_DNA"/>
</dbReference>
<dbReference type="SMR" id="Q3Z330"/>
<dbReference type="KEGG" id="ssn:SSON_1107"/>
<dbReference type="HOGENOM" id="CLU_040416_1_0_6"/>
<dbReference type="Proteomes" id="UP000002529">
    <property type="component" value="Chromosome"/>
</dbReference>
<dbReference type="GO" id="GO:0005737">
    <property type="term" value="C:cytoplasm"/>
    <property type="evidence" value="ECO:0007669"/>
    <property type="project" value="UniProtKB-SubCell"/>
</dbReference>
<dbReference type="GO" id="GO:0047429">
    <property type="term" value="F:nucleoside triphosphate diphosphatase activity"/>
    <property type="evidence" value="ECO:0007669"/>
    <property type="project" value="InterPro"/>
</dbReference>
<dbReference type="GO" id="GO:0009117">
    <property type="term" value="P:nucleotide metabolic process"/>
    <property type="evidence" value="ECO:0007669"/>
    <property type="project" value="UniProtKB-KW"/>
</dbReference>
<dbReference type="CDD" id="cd00555">
    <property type="entry name" value="Maf"/>
    <property type="match status" value="1"/>
</dbReference>
<dbReference type="FunFam" id="3.90.950.10:FF:000005">
    <property type="entry name" value="7-methyl-GTP pyrophosphatase"/>
    <property type="match status" value="1"/>
</dbReference>
<dbReference type="Gene3D" id="3.90.950.10">
    <property type="match status" value="1"/>
</dbReference>
<dbReference type="HAMAP" id="MF_00528">
    <property type="entry name" value="Maf"/>
    <property type="match status" value="1"/>
</dbReference>
<dbReference type="InterPro" id="IPR029001">
    <property type="entry name" value="ITPase-like_fam"/>
</dbReference>
<dbReference type="InterPro" id="IPR003697">
    <property type="entry name" value="Maf-like"/>
</dbReference>
<dbReference type="NCBIfam" id="TIGR00172">
    <property type="entry name" value="maf"/>
    <property type="match status" value="1"/>
</dbReference>
<dbReference type="PANTHER" id="PTHR43213:SF10">
    <property type="entry name" value="7-METHYL-GTP PYROPHOSPHATASE"/>
    <property type="match status" value="1"/>
</dbReference>
<dbReference type="PANTHER" id="PTHR43213">
    <property type="entry name" value="BIFUNCTIONAL DTTP/UTP PYROPHOSPHATASE/METHYLTRANSFERASE PROTEIN-RELATED"/>
    <property type="match status" value="1"/>
</dbReference>
<dbReference type="Pfam" id="PF02545">
    <property type="entry name" value="Maf"/>
    <property type="match status" value="1"/>
</dbReference>
<dbReference type="PIRSF" id="PIRSF006305">
    <property type="entry name" value="Maf"/>
    <property type="match status" value="1"/>
</dbReference>
<dbReference type="SUPFAM" id="SSF52972">
    <property type="entry name" value="ITPase-like"/>
    <property type="match status" value="1"/>
</dbReference>
<comment type="function">
    <text evidence="1">Nucleoside triphosphate pyrophosphatase that hydrolyzes 7-methyl-GTP (m(7)GTP). May have a dual role in cell division arrest and in preventing the incorporation of modified nucleotides into cellular nucleic acids.</text>
</comment>
<comment type="catalytic activity">
    <reaction evidence="1">
        <text>N(7)-methyl-GTP + H2O = N(7)-methyl-GMP + diphosphate + H(+)</text>
        <dbReference type="Rhea" id="RHEA:58744"/>
        <dbReference type="ChEBI" id="CHEBI:15377"/>
        <dbReference type="ChEBI" id="CHEBI:15378"/>
        <dbReference type="ChEBI" id="CHEBI:33019"/>
        <dbReference type="ChEBI" id="CHEBI:58285"/>
        <dbReference type="ChEBI" id="CHEBI:87133"/>
    </reaction>
</comment>
<comment type="cofactor">
    <cofactor evidence="1">
        <name>a divalent metal cation</name>
        <dbReference type="ChEBI" id="CHEBI:60240"/>
    </cofactor>
</comment>
<comment type="subcellular location">
    <subcellularLocation>
        <location evidence="1">Cytoplasm</location>
    </subcellularLocation>
</comment>
<comment type="similarity">
    <text evidence="1">Belongs to the Maf family. YceF subfamily.</text>
</comment>
<comment type="sequence caution" evidence="2">
    <conflict type="erroneous initiation">
        <sequence resource="EMBL-CDS" id="AAZ87832"/>
    </conflict>
</comment>
<organism>
    <name type="scientific">Shigella sonnei (strain Ss046)</name>
    <dbReference type="NCBI Taxonomy" id="300269"/>
    <lineage>
        <taxon>Bacteria</taxon>
        <taxon>Pseudomonadati</taxon>
        <taxon>Pseudomonadota</taxon>
        <taxon>Gammaproteobacteria</taxon>
        <taxon>Enterobacterales</taxon>
        <taxon>Enterobacteriaceae</taxon>
        <taxon>Shigella</taxon>
    </lineage>
</organism>
<keyword id="KW-0963">Cytoplasm</keyword>
<keyword id="KW-0378">Hydrolase</keyword>
<keyword id="KW-0546">Nucleotide metabolism</keyword>
<keyword id="KW-1185">Reference proteome</keyword>
<reference key="1">
    <citation type="journal article" date="2005" name="Nucleic Acids Res.">
        <title>Genome dynamics and diversity of Shigella species, the etiologic agents of bacillary dysentery.</title>
        <authorList>
            <person name="Yang F."/>
            <person name="Yang J."/>
            <person name="Zhang X."/>
            <person name="Chen L."/>
            <person name="Jiang Y."/>
            <person name="Yan Y."/>
            <person name="Tang X."/>
            <person name="Wang J."/>
            <person name="Xiong Z."/>
            <person name="Dong J."/>
            <person name="Xue Y."/>
            <person name="Zhu Y."/>
            <person name="Xu X."/>
            <person name="Sun L."/>
            <person name="Chen S."/>
            <person name="Nie H."/>
            <person name="Peng J."/>
            <person name="Xu J."/>
            <person name="Wang Y."/>
            <person name="Yuan Z."/>
            <person name="Wen Y."/>
            <person name="Yao Z."/>
            <person name="Shen Y."/>
            <person name="Qiang B."/>
            <person name="Hou Y."/>
            <person name="Yu J."/>
            <person name="Jin Q."/>
        </authorList>
    </citation>
    <scope>NUCLEOTIDE SEQUENCE [LARGE SCALE GENOMIC DNA]</scope>
    <source>
        <strain>Ss046</strain>
    </source>
</reference>
<evidence type="ECO:0000255" key="1">
    <source>
        <dbReference type="HAMAP-Rule" id="MF_00528"/>
    </source>
</evidence>
<evidence type="ECO:0000305" key="2"/>
<gene>
    <name type="primary">yceF1</name>
    <name type="ordered locus">SSON_1107</name>
</gene>
<sequence>MPKLILASTSPWRRALLEKLQISFECAAPEVDETPRSDESPRQLVLRLAQEKAQSLASRYPDHLIIGSDQVCVLDGEITGKPLTEENARLQLRKASGNIVTFYTGLALFNSANGHLQTEVEPFDVHFRHLSEAEIDNYVRKEHPLHCAGSFKSEGFGITLFERLEGRDPNTLVGLPLIALCQMLRREGKNPLMG</sequence>
<accession>Q3Z330</accession>
<protein>
    <recommendedName>
        <fullName evidence="1">7-methyl-GTP pyrophosphatase</fullName>
        <shortName evidence="1">m(7)GTP pyrophosphatase</shortName>
        <ecNumber evidence="1">3.6.1.-</ecNumber>
    </recommendedName>
</protein>
<name>NTPPB_SHISS</name>
<proteinExistence type="inferred from homology"/>